<protein>
    <recommendedName>
        <fullName>F-box/LRR-repeat protein 20</fullName>
    </recommendedName>
    <alternativeName>
        <fullName>F-box and leucine-rich repeat protein 20</fullName>
    </alternativeName>
    <alternativeName>
        <fullName>F-box/LRR-repeat protein 2-like</fullName>
    </alternativeName>
</protein>
<gene>
    <name type="primary">Fbxl20</name>
    <name type="synonym">Fbl2</name>
</gene>
<sequence length="436" mass="48396">MRRDVNGVTKSRFEMFSNSDEAVINKKLPKELLLRIFSFLDVVTLCRCAQVSRAWNVLALDGSNWQRIDLFDFQRDIEGRVVENISKRCGGFLRKLSLRGCLGVGDNALRTFAQNCRNIEVLSLNGCTKTTDATCTSLSKFCSKLRHLDLASCTSITNMSLKALSEGCPLLEQLNISWCDQVTKDGIQALVRGCGGLKALFLKGCTQLEDEALKYIGAHCPELVTLNLQTCLQITDEGLITICRGCHKLQSLCASGCSNITDAILNALGQNCPRLRILEVARCSQLTDVGFTTLARNCHELEKMDLEECVQITDSTLIQLSIHCPRLQVLSLSHCELITDDGIRHLGNGACAHDQLEVIELDNCPLITDASLEHLKSCHSLERIELYDCQQITRAGIKRLRTHLPNIKVHAYFAPVTPPPSVGGSRQRFCRCCIIL</sequence>
<keyword id="KW-0025">Alternative splicing</keyword>
<keyword id="KW-0963">Cytoplasm</keyword>
<keyword id="KW-0433">Leucine-rich repeat</keyword>
<keyword id="KW-0597">Phosphoprotein</keyword>
<keyword id="KW-1185">Reference proteome</keyword>
<keyword id="KW-0677">Repeat</keyword>
<keyword id="KW-0833">Ubl conjugation pathway</keyword>
<proteinExistence type="evidence at protein level"/>
<organism>
    <name type="scientific">Mus musculus</name>
    <name type="common">Mouse</name>
    <dbReference type="NCBI Taxonomy" id="10090"/>
    <lineage>
        <taxon>Eukaryota</taxon>
        <taxon>Metazoa</taxon>
        <taxon>Chordata</taxon>
        <taxon>Craniata</taxon>
        <taxon>Vertebrata</taxon>
        <taxon>Euteleostomi</taxon>
        <taxon>Mammalia</taxon>
        <taxon>Eutheria</taxon>
        <taxon>Euarchontoglires</taxon>
        <taxon>Glires</taxon>
        <taxon>Rodentia</taxon>
        <taxon>Myomorpha</taxon>
        <taxon>Muroidea</taxon>
        <taxon>Muridae</taxon>
        <taxon>Murinae</taxon>
        <taxon>Mus</taxon>
        <taxon>Mus</taxon>
    </lineage>
</organism>
<dbReference type="EMBL" id="EF649694">
    <property type="protein sequence ID" value="ABU95014.1"/>
    <property type="molecule type" value="mRNA"/>
</dbReference>
<dbReference type="EMBL" id="AK012109">
    <property type="protein sequence ID" value="BAB28039.1"/>
    <property type="molecule type" value="mRNA"/>
</dbReference>
<dbReference type="EMBL" id="AK036217">
    <property type="protein sequence ID" value="BAC29349.1"/>
    <property type="status" value="ALT_SEQ"/>
    <property type="molecule type" value="mRNA"/>
</dbReference>
<dbReference type="EMBL" id="AK144786">
    <property type="protein sequence ID" value="BAE26066.1"/>
    <property type="molecule type" value="mRNA"/>
</dbReference>
<dbReference type="EMBL" id="AK220232">
    <property type="protein sequence ID" value="BAD90157.1"/>
    <property type="status" value="ALT_INIT"/>
    <property type="molecule type" value="mRNA"/>
</dbReference>
<dbReference type="EMBL" id="AL591205">
    <property type="status" value="NOT_ANNOTATED_CDS"/>
    <property type="molecule type" value="Genomic_DNA"/>
</dbReference>
<dbReference type="EMBL" id="AL591209">
    <property type="status" value="NOT_ANNOTATED_CDS"/>
    <property type="molecule type" value="Genomic_DNA"/>
</dbReference>
<dbReference type="CCDS" id="CCDS25339.1">
    <molecule id="Q9CZV8-1"/>
</dbReference>
<dbReference type="RefSeq" id="NP_082425.1">
    <molecule id="Q9CZV8-1"/>
    <property type="nucleotide sequence ID" value="NM_028149.1"/>
</dbReference>
<dbReference type="RefSeq" id="XP_006534361.1">
    <molecule id="Q9CZV8-3"/>
    <property type="nucleotide sequence ID" value="XM_006534298.4"/>
</dbReference>
<dbReference type="RefSeq" id="XP_006534362.1">
    <molecule id="Q9CZV8-4"/>
    <property type="nucleotide sequence ID" value="XM_006534299.5"/>
</dbReference>
<dbReference type="SMR" id="Q9CZV8"/>
<dbReference type="BioGRID" id="215210">
    <property type="interactions" value="5"/>
</dbReference>
<dbReference type="CORUM" id="Q9CZV8"/>
<dbReference type="FunCoup" id="Q9CZV8">
    <property type="interactions" value="569"/>
</dbReference>
<dbReference type="IntAct" id="Q9CZV8">
    <property type="interactions" value="5"/>
</dbReference>
<dbReference type="STRING" id="10090.ENSMUSP00000099432"/>
<dbReference type="GlyGen" id="Q9CZV8">
    <property type="glycosylation" value="2 sites, 1 N-linked glycan (1 site)"/>
</dbReference>
<dbReference type="iPTMnet" id="Q9CZV8"/>
<dbReference type="PhosphoSitePlus" id="Q9CZV8"/>
<dbReference type="SwissPalm" id="Q9CZV8"/>
<dbReference type="jPOST" id="Q9CZV8"/>
<dbReference type="PaxDb" id="10090-ENSMUSP00000099432"/>
<dbReference type="PeptideAtlas" id="Q9CZV8"/>
<dbReference type="ProteomicsDB" id="271819">
    <molecule id="Q9CZV8-1"/>
</dbReference>
<dbReference type="ProteomicsDB" id="271820">
    <molecule id="Q9CZV8-4"/>
</dbReference>
<dbReference type="ProteomicsDB" id="271821">
    <molecule id="Q9CZV8-3"/>
</dbReference>
<dbReference type="Pumba" id="Q9CZV8"/>
<dbReference type="Antibodypedia" id="28248">
    <property type="antibodies" value="151 antibodies from 25 providers"/>
</dbReference>
<dbReference type="DNASU" id="72194"/>
<dbReference type="Ensembl" id="ENSMUST00000103143.10">
    <molecule id="Q9CZV8-1"/>
    <property type="protein sequence ID" value="ENSMUSP00000099432.4"/>
    <property type="gene ID" value="ENSMUSG00000020883.19"/>
</dbReference>
<dbReference type="GeneID" id="72194"/>
<dbReference type="KEGG" id="mmu:72194"/>
<dbReference type="UCSC" id="uc007lfm.1">
    <molecule id="Q9CZV8-1"/>
    <property type="organism name" value="mouse"/>
</dbReference>
<dbReference type="UCSC" id="uc009vah.1">
    <molecule id="Q9CZV8-3"/>
    <property type="organism name" value="mouse"/>
</dbReference>
<dbReference type="AGR" id="MGI:1919444"/>
<dbReference type="CTD" id="84961"/>
<dbReference type="MGI" id="MGI:1919444">
    <property type="gene designation" value="Fbxl20"/>
</dbReference>
<dbReference type="VEuPathDB" id="HostDB:ENSMUSG00000020883"/>
<dbReference type="eggNOG" id="KOG4341">
    <property type="taxonomic scope" value="Eukaryota"/>
</dbReference>
<dbReference type="GeneTree" id="ENSGT00940000153845"/>
<dbReference type="HOGENOM" id="CLU_016072_7_1_1"/>
<dbReference type="InParanoid" id="Q9CZV8"/>
<dbReference type="OMA" id="TKTTDAX"/>
<dbReference type="OrthoDB" id="550575at2759"/>
<dbReference type="PhylomeDB" id="Q9CZV8"/>
<dbReference type="TreeFam" id="TF313434"/>
<dbReference type="Reactome" id="R-MMU-8951664">
    <property type="pathway name" value="Neddylation"/>
</dbReference>
<dbReference type="Reactome" id="R-MMU-983168">
    <property type="pathway name" value="Antigen processing: Ubiquitination &amp; Proteasome degradation"/>
</dbReference>
<dbReference type="BioGRID-ORCS" id="72194">
    <property type="hits" value="1 hit in 77 CRISPR screens"/>
</dbReference>
<dbReference type="ChiTaRS" id="Fbxl20">
    <property type="organism name" value="mouse"/>
</dbReference>
<dbReference type="PRO" id="PR:Q9CZV8"/>
<dbReference type="Proteomes" id="UP000000589">
    <property type="component" value="Chromosome 11"/>
</dbReference>
<dbReference type="RNAct" id="Q9CZV8">
    <property type="molecule type" value="protein"/>
</dbReference>
<dbReference type="Bgee" id="ENSMUSG00000020883">
    <property type="expression patterns" value="Expressed in cleaving embryo and 222 other cell types or tissues"/>
</dbReference>
<dbReference type="ExpressionAtlas" id="Q9CZV8">
    <property type="expression patterns" value="baseline and differential"/>
</dbReference>
<dbReference type="GO" id="GO:0005737">
    <property type="term" value="C:cytoplasm"/>
    <property type="evidence" value="ECO:0007669"/>
    <property type="project" value="UniProtKB-SubCell"/>
</dbReference>
<dbReference type="GO" id="GO:0098978">
    <property type="term" value="C:glutamatergic synapse"/>
    <property type="evidence" value="ECO:0000314"/>
    <property type="project" value="SynGO"/>
</dbReference>
<dbReference type="GO" id="GO:0098793">
    <property type="term" value="C:presynapse"/>
    <property type="evidence" value="ECO:0007669"/>
    <property type="project" value="GOC"/>
</dbReference>
<dbReference type="GO" id="GO:0098685">
    <property type="term" value="C:Schaffer collateral - CA1 synapse"/>
    <property type="evidence" value="ECO:0000314"/>
    <property type="project" value="SynGO"/>
</dbReference>
<dbReference type="GO" id="GO:0045202">
    <property type="term" value="C:synapse"/>
    <property type="evidence" value="ECO:0000314"/>
    <property type="project" value="SynGO"/>
</dbReference>
<dbReference type="GO" id="GO:0001662">
    <property type="term" value="P:behavioral fear response"/>
    <property type="evidence" value="ECO:0000315"/>
    <property type="project" value="MGI"/>
</dbReference>
<dbReference type="GO" id="GO:0099575">
    <property type="term" value="P:regulation of protein catabolic process at presynapse, modulating synaptic transmission"/>
    <property type="evidence" value="ECO:0000314"/>
    <property type="project" value="SynGO"/>
</dbReference>
<dbReference type="GO" id="GO:2000300">
    <property type="term" value="P:regulation of synaptic vesicle exocytosis"/>
    <property type="evidence" value="ECO:0000314"/>
    <property type="project" value="SynGO"/>
</dbReference>
<dbReference type="CDD" id="cd22115">
    <property type="entry name" value="F-box_FBXL2-like"/>
    <property type="match status" value="1"/>
</dbReference>
<dbReference type="FunFam" id="3.80.10.10:FF:000339">
    <property type="entry name" value="F-box/LRR-repeat protein 2 isoform X1"/>
    <property type="match status" value="1"/>
</dbReference>
<dbReference type="FunFam" id="3.80.10.10:FF:000578">
    <property type="entry name" value="F-box/LRR-repeat protein 2 isoform X1"/>
    <property type="match status" value="1"/>
</dbReference>
<dbReference type="FunFam" id="3.80.10.10:FF:000042">
    <property type="entry name" value="F-box/LRR-repeat protein 20 isoform 2"/>
    <property type="match status" value="1"/>
</dbReference>
<dbReference type="FunFam" id="1.20.1280.50:FF:000013">
    <property type="entry name" value="F-box/LRR-repeat protein 20 isoform X1"/>
    <property type="match status" value="1"/>
</dbReference>
<dbReference type="Gene3D" id="1.20.1280.50">
    <property type="match status" value="1"/>
</dbReference>
<dbReference type="Gene3D" id="3.80.10.10">
    <property type="entry name" value="Ribonuclease Inhibitor"/>
    <property type="match status" value="2"/>
</dbReference>
<dbReference type="InterPro" id="IPR001810">
    <property type="entry name" value="F-box_dom"/>
</dbReference>
<dbReference type="InterPro" id="IPR001611">
    <property type="entry name" value="Leu-rich_rpt"/>
</dbReference>
<dbReference type="InterPro" id="IPR006553">
    <property type="entry name" value="Leu-rich_rpt_Cys-con_subtyp"/>
</dbReference>
<dbReference type="InterPro" id="IPR032675">
    <property type="entry name" value="LRR_dom_sf"/>
</dbReference>
<dbReference type="PANTHER" id="PTHR13318:SF95">
    <property type="entry name" value="F-BOX PROTEIN YLR352W"/>
    <property type="match status" value="1"/>
</dbReference>
<dbReference type="PANTHER" id="PTHR13318">
    <property type="entry name" value="PARTNER OF PAIRED, ISOFORM B-RELATED"/>
    <property type="match status" value="1"/>
</dbReference>
<dbReference type="Pfam" id="PF12937">
    <property type="entry name" value="F-box-like"/>
    <property type="match status" value="1"/>
</dbReference>
<dbReference type="Pfam" id="PF13516">
    <property type="entry name" value="LRR_6"/>
    <property type="match status" value="4"/>
</dbReference>
<dbReference type="SMART" id="SM00256">
    <property type="entry name" value="FBOX"/>
    <property type="match status" value="1"/>
</dbReference>
<dbReference type="SMART" id="SM00367">
    <property type="entry name" value="LRR_CC"/>
    <property type="match status" value="12"/>
</dbReference>
<dbReference type="SUPFAM" id="SSF52047">
    <property type="entry name" value="RNI-like"/>
    <property type="match status" value="1"/>
</dbReference>
<dbReference type="PROSITE" id="PS50181">
    <property type="entry name" value="FBOX"/>
    <property type="match status" value="1"/>
</dbReference>
<reference key="1">
    <citation type="journal article" date="2007" name="Cell">
        <title>SCRAPPER-dependent ubiquitination of active zone protein RIM1 regulates synaptic vesicle release.</title>
        <authorList>
            <person name="Yao I."/>
            <person name="Takagi H."/>
            <person name="Ageta H."/>
            <person name="Kahyo T."/>
            <person name="Sato S."/>
            <person name="Hatanaka K."/>
            <person name="Fukuda Y."/>
            <person name="Chiba T."/>
            <person name="Morone N."/>
            <person name="Yuasa S."/>
            <person name="Inokuchi K."/>
            <person name="Ohtsuka T."/>
            <person name="Macgregor G.R."/>
            <person name="Tanaka K."/>
            <person name="Setou M."/>
        </authorList>
    </citation>
    <scope>NUCLEOTIDE SEQUENCE [MRNA] (ISOFORM 3)</scope>
    <scope>FUNCTION</scope>
    <scope>SUBCELLULAR LOCATION</scope>
    <scope>TISSUE SPECIFICITY</scope>
    <scope>INTERACTION WITH RIMS1; SKP1 AND CUL1</scope>
    <scope>DISRUPTION PHENOTYPE</scope>
    <source>
        <strain>C57BL/6J</strain>
        <tissue>Embryo</tissue>
    </source>
</reference>
<reference key="2">
    <citation type="journal article" date="2005" name="Science">
        <title>The transcriptional landscape of the mammalian genome.</title>
        <authorList>
            <person name="Carninci P."/>
            <person name="Kasukawa T."/>
            <person name="Katayama S."/>
            <person name="Gough J."/>
            <person name="Frith M.C."/>
            <person name="Maeda N."/>
            <person name="Oyama R."/>
            <person name="Ravasi T."/>
            <person name="Lenhard B."/>
            <person name="Wells C."/>
            <person name="Kodzius R."/>
            <person name="Shimokawa K."/>
            <person name="Bajic V.B."/>
            <person name="Brenner S.E."/>
            <person name="Batalov S."/>
            <person name="Forrest A.R."/>
            <person name="Zavolan M."/>
            <person name="Davis M.J."/>
            <person name="Wilming L.G."/>
            <person name="Aidinis V."/>
            <person name="Allen J.E."/>
            <person name="Ambesi-Impiombato A."/>
            <person name="Apweiler R."/>
            <person name="Aturaliya R.N."/>
            <person name="Bailey T.L."/>
            <person name="Bansal M."/>
            <person name="Baxter L."/>
            <person name="Beisel K.W."/>
            <person name="Bersano T."/>
            <person name="Bono H."/>
            <person name="Chalk A.M."/>
            <person name="Chiu K.P."/>
            <person name="Choudhary V."/>
            <person name="Christoffels A."/>
            <person name="Clutterbuck D.R."/>
            <person name="Crowe M.L."/>
            <person name="Dalla E."/>
            <person name="Dalrymple B.P."/>
            <person name="de Bono B."/>
            <person name="Della Gatta G."/>
            <person name="di Bernardo D."/>
            <person name="Down T."/>
            <person name="Engstrom P."/>
            <person name="Fagiolini M."/>
            <person name="Faulkner G."/>
            <person name="Fletcher C.F."/>
            <person name="Fukushima T."/>
            <person name="Furuno M."/>
            <person name="Futaki S."/>
            <person name="Gariboldi M."/>
            <person name="Georgii-Hemming P."/>
            <person name="Gingeras T.R."/>
            <person name="Gojobori T."/>
            <person name="Green R.E."/>
            <person name="Gustincich S."/>
            <person name="Harbers M."/>
            <person name="Hayashi Y."/>
            <person name="Hensch T.K."/>
            <person name="Hirokawa N."/>
            <person name="Hill D."/>
            <person name="Huminiecki L."/>
            <person name="Iacono M."/>
            <person name="Ikeo K."/>
            <person name="Iwama A."/>
            <person name="Ishikawa T."/>
            <person name="Jakt M."/>
            <person name="Kanapin A."/>
            <person name="Katoh M."/>
            <person name="Kawasawa Y."/>
            <person name="Kelso J."/>
            <person name="Kitamura H."/>
            <person name="Kitano H."/>
            <person name="Kollias G."/>
            <person name="Krishnan S.P."/>
            <person name="Kruger A."/>
            <person name="Kummerfeld S.K."/>
            <person name="Kurochkin I.V."/>
            <person name="Lareau L.F."/>
            <person name="Lazarevic D."/>
            <person name="Lipovich L."/>
            <person name="Liu J."/>
            <person name="Liuni S."/>
            <person name="McWilliam S."/>
            <person name="Madan Babu M."/>
            <person name="Madera M."/>
            <person name="Marchionni L."/>
            <person name="Matsuda H."/>
            <person name="Matsuzawa S."/>
            <person name="Miki H."/>
            <person name="Mignone F."/>
            <person name="Miyake S."/>
            <person name="Morris K."/>
            <person name="Mottagui-Tabar S."/>
            <person name="Mulder N."/>
            <person name="Nakano N."/>
            <person name="Nakauchi H."/>
            <person name="Ng P."/>
            <person name="Nilsson R."/>
            <person name="Nishiguchi S."/>
            <person name="Nishikawa S."/>
            <person name="Nori F."/>
            <person name="Ohara O."/>
            <person name="Okazaki Y."/>
            <person name="Orlando V."/>
            <person name="Pang K.C."/>
            <person name="Pavan W.J."/>
            <person name="Pavesi G."/>
            <person name="Pesole G."/>
            <person name="Petrovsky N."/>
            <person name="Piazza S."/>
            <person name="Reed J."/>
            <person name="Reid J.F."/>
            <person name="Ring B.Z."/>
            <person name="Ringwald M."/>
            <person name="Rost B."/>
            <person name="Ruan Y."/>
            <person name="Salzberg S.L."/>
            <person name="Sandelin A."/>
            <person name="Schneider C."/>
            <person name="Schoenbach C."/>
            <person name="Sekiguchi K."/>
            <person name="Semple C.A."/>
            <person name="Seno S."/>
            <person name="Sessa L."/>
            <person name="Sheng Y."/>
            <person name="Shibata Y."/>
            <person name="Shimada H."/>
            <person name="Shimada K."/>
            <person name="Silva D."/>
            <person name="Sinclair B."/>
            <person name="Sperling S."/>
            <person name="Stupka E."/>
            <person name="Sugiura K."/>
            <person name="Sultana R."/>
            <person name="Takenaka Y."/>
            <person name="Taki K."/>
            <person name="Tammoja K."/>
            <person name="Tan S.L."/>
            <person name="Tang S."/>
            <person name="Taylor M.S."/>
            <person name="Tegner J."/>
            <person name="Teichmann S.A."/>
            <person name="Ueda H.R."/>
            <person name="van Nimwegen E."/>
            <person name="Verardo R."/>
            <person name="Wei C.L."/>
            <person name="Yagi K."/>
            <person name="Yamanishi H."/>
            <person name="Zabarovsky E."/>
            <person name="Zhu S."/>
            <person name="Zimmer A."/>
            <person name="Hide W."/>
            <person name="Bult C."/>
            <person name="Grimmond S.M."/>
            <person name="Teasdale R.D."/>
            <person name="Liu E.T."/>
            <person name="Brusic V."/>
            <person name="Quackenbush J."/>
            <person name="Wahlestedt C."/>
            <person name="Mattick J.S."/>
            <person name="Hume D.A."/>
            <person name="Kai C."/>
            <person name="Sasaki D."/>
            <person name="Tomaru Y."/>
            <person name="Fukuda S."/>
            <person name="Kanamori-Katayama M."/>
            <person name="Suzuki M."/>
            <person name="Aoki J."/>
            <person name="Arakawa T."/>
            <person name="Iida J."/>
            <person name="Imamura K."/>
            <person name="Itoh M."/>
            <person name="Kato T."/>
            <person name="Kawaji H."/>
            <person name="Kawagashira N."/>
            <person name="Kawashima T."/>
            <person name="Kojima M."/>
            <person name="Kondo S."/>
            <person name="Konno H."/>
            <person name="Nakano K."/>
            <person name="Ninomiya N."/>
            <person name="Nishio T."/>
            <person name="Okada M."/>
            <person name="Plessy C."/>
            <person name="Shibata K."/>
            <person name="Shiraki T."/>
            <person name="Suzuki S."/>
            <person name="Tagami M."/>
            <person name="Waki K."/>
            <person name="Watahiki A."/>
            <person name="Okamura-Oho Y."/>
            <person name="Suzuki H."/>
            <person name="Kawai J."/>
            <person name="Hayashizaki Y."/>
        </authorList>
    </citation>
    <scope>NUCLEOTIDE SEQUENCE [LARGE SCALE MRNA] (ISOFORMS 1 AND 2)</scope>
    <source>
        <strain>C57BL/6J</strain>
        <tissue>Cerebellum</tissue>
        <tissue>Embryo</tissue>
        <tissue>Lung</tissue>
    </source>
</reference>
<reference key="3">
    <citation type="submission" date="2005-02" db="EMBL/GenBank/DDBJ databases">
        <title>Prediction of the coding sequences of mouse homologues of KIAA gene. The complete nucleotide sequences of mouse KIAA-homologous cDNAs identified by screening of terminal sequences of cDNA clones randomly sampled from size-fractionated libraries.</title>
        <authorList>
            <person name="Okazaki N."/>
            <person name="Kikuno R.F."/>
            <person name="Ohara R."/>
            <person name="Inamoto S."/>
            <person name="Nagase T."/>
            <person name="Ohara O."/>
            <person name="Koga H."/>
        </authorList>
    </citation>
    <scope>NUCLEOTIDE SEQUENCE [LARGE SCALE MRNA] (ISOFORM 1)</scope>
    <source>
        <tissue>Natural killer cell</tissue>
    </source>
</reference>
<reference key="4">
    <citation type="journal article" date="2009" name="PLoS Biol.">
        <title>Lineage-specific biology revealed by a finished genome assembly of the mouse.</title>
        <authorList>
            <person name="Church D.M."/>
            <person name="Goodstadt L."/>
            <person name="Hillier L.W."/>
            <person name="Zody M.C."/>
            <person name="Goldstein S."/>
            <person name="She X."/>
            <person name="Bult C.J."/>
            <person name="Agarwala R."/>
            <person name="Cherry J.L."/>
            <person name="DiCuccio M."/>
            <person name="Hlavina W."/>
            <person name="Kapustin Y."/>
            <person name="Meric P."/>
            <person name="Maglott D."/>
            <person name="Birtle Z."/>
            <person name="Marques A.C."/>
            <person name="Graves T."/>
            <person name="Zhou S."/>
            <person name="Teague B."/>
            <person name="Potamousis K."/>
            <person name="Churas C."/>
            <person name="Place M."/>
            <person name="Herschleb J."/>
            <person name="Runnheim R."/>
            <person name="Forrest D."/>
            <person name="Amos-Landgraf J."/>
            <person name="Schwartz D.C."/>
            <person name="Cheng Z."/>
            <person name="Lindblad-Toh K."/>
            <person name="Eichler E.E."/>
            <person name="Ponting C.P."/>
        </authorList>
    </citation>
    <scope>NUCLEOTIDE SEQUENCE [LARGE SCALE GENOMIC DNA]</scope>
    <source>
        <strain>C57BL/6J</strain>
    </source>
</reference>
<reference key="5">
    <citation type="journal article" date="2007" name="Proc. Natl. Acad. Sci. U.S.A.">
        <title>Large-scale phosphorylation analysis of mouse liver.</title>
        <authorList>
            <person name="Villen J."/>
            <person name="Beausoleil S.A."/>
            <person name="Gerber S.A."/>
            <person name="Gygi S.P."/>
        </authorList>
    </citation>
    <scope>PHOSPHORYLATION [LARGE SCALE ANALYSIS] AT THR-417 AND SER-421</scope>
    <scope>IDENTIFICATION BY MASS SPECTROMETRY [LARGE SCALE ANALYSIS]</scope>
    <source>
        <tissue>Liver</tissue>
    </source>
</reference>
<reference key="6">
    <citation type="journal article" date="2009" name="Immunity">
        <title>The phagosomal proteome in interferon-gamma-activated macrophages.</title>
        <authorList>
            <person name="Trost M."/>
            <person name="English L."/>
            <person name="Lemieux S."/>
            <person name="Courcelles M."/>
            <person name="Desjardins M."/>
            <person name="Thibault P."/>
        </authorList>
    </citation>
    <scope>PHOSPHORYLATION [LARGE SCALE ANALYSIS] AT THR-417 AND SER-421</scope>
    <scope>IDENTIFICATION BY MASS SPECTROMETRY [LARGE SCALE ANALYSIS]</scope>
</reference>
<reference key="7">
    <citation type="journal article" date="2010" name="Cell">
        <title>A tissue-specific atlas of mouse protein phosphorylation and expression.</title>
        <authorList>
            <person name="Huttlin E.L."/>
            <person name="Jedrychowski M.P."/>
            <person name="Elias J.E."/>
            <person name="Goswami T."/>
            <person name="Rad R."/>
            <person name="Beausoleil S.A."/>
            <person name="Villen J."/>
            <person name="Haas W."/>
            <person name="Sowa M.E."/>
            <person name="Gygi S.P."/>
        </authorList>
    </citation>
    <scope>PHOSPHORYLATION [LARGE SCALE ANALYSIS] AT THR-417 AND SER-421</scope>
    <scope>IDENTIFICATION BY MASS SPECTROMETRY [LARGE SCALE ANALYSIS]</scope>
    <source>
        <tissue>Brain</tissue>
        <tissue>Heart</tissue>
        <tissue>Kidney</tissue>
        <tissue>Lung</tissue>
        <tissue>Spleen</tissue>
    </source>
</reference>
<feature type="chain" id="PRO_0000119871" description="F-box/LRR-repeat protein 20">
    <location>
        <begin position="1"/>
        <end position="436"/>
    </location>
</feature>
<feature type="domain" description="F-box" evidence="1">
    <location>
        <begin position="22"/>
        <end position="68"/>
    </location>
</feature>
<feature type="repeat" description="LRR 1">
    <location>
        <begin position="74"/>
        <end position="100"/>
    </location>
</feature>
<feature type="repeat" description="LRR 2">
    <location>
        <begin position="101"/>
        <end position="126"/>
    </location>
</feature>
<feature type="repeat" description="LRR 3">
    <location>
        <begin position="127"/>
        <end position="152"/>
    </location>
</feature>
<feature type="repeat" description="LRR 4">
    <location>
        <begin position="153"/>
        <end position="178"/>
    </location>
</feature>
<feature type="repeat" description="LRR 5">
    <location>
        <begin position="179"/>
        <end position="204"/>
    </location>
</feature>
<feature type="repeat" description="LRR 6">
    <location>
        <begin position="205"/>
        <end position="230"/>
    </location>
</feature>
<feature type="repeat" description="LRR 7">
    <location>
        <begin position="231"/>
        <end position="256"/>
    </location>
</feature>
<feature type="repeat" description="LRR 8">
    <location>
        <begin position="257"/>
        <end position="282"/>
    </location>
</feature>
<feature type="repeat" description="LRR 9">
    <location>
        <begin position="283"/>
        <end position="308"/>
    </location>
</feature>
<feature type="repeat" description="LRR 10">
    <location>
        <begin position="309"/>
        <end position="334"/>
    </location>
</feature>
<feature type="repeat" description="LRR 11">
    <location>
        <begin position="335"/>
        <end position="363"/>
    </location>
</feature>
<feature type="repeat" description="LRR 12">
    <location>
        <begin position="364"/>
        <end position="388"/>
    </location>
</feature>
<feature type="repeat" description="LRR 13">
    <location>
        <begin position="389"/>
        <end position="414"/>
    </location>
</feature>
<feature type="modified residue" description="Phosphothreonine" evidence="6 7 8">
    <location>
        <position position="417"/>
    </location>
</feature>
<feature type="modified residue" description="Phosphoserine" evidence="6 7 8">
    <location>
        <position position="421"/>
    </location>
</feature>
<feature type="splice variant" id="VSP_038354" description="In isoform 2." evidence="3">
    <location>
        <begin position="1"/>
        <end position="14"/>
    </location>
</feature>
<feature type="splice variant" id="VSP_030770" description="In isoform 3." evidence="4">
    <original>MRRDVNGVTKSRFE</original>
    <variation>MAPSRDRLLHFGFKAT</variation>
    <location>
        <begin position="1"/>
        <end position="14"/>
    </location>
</feature>
<feature type="sequence conflict" description="In Ref. 2; BAB28039." evidence="5" ref="2">
    <original>L</original>
    <variation>P</variation>
    <location>
        <position position="40"/>
    </location>
</feature>
<feature type="sequence conflict" description="In Ref. 2; BAB28039." evidence="5" ref="2">
    <original>HSL</original>
    <variation>PSF</variation>
    <location>
        <begin position="379"/>
        <end position="381"/>
    </location>
</feature>
<name>FXL20_MOUSE</name>
<comment type="function">
    <text evidence="2">Substrate-recognition component of the SCF (SKP1-CUL1-F-box protein)-type E3 ubiquitin ligase complex. Isoform 3 regulates neural transmission by binding and ubiquitinating RIMS1, a modulator of presynaptic plasticity.</text>
</comment>
<comment type="subunit">
    <text evidence="2">Interacts with SKP1 and CUL1.</text>
</comment>
<comment type="interaction">
    <interactant intactId="EBI-1551033">
        <id>Q9CZV8</id>
    </interactant>
    <interactant intactId="EBI-775541">
        <id>Q99NE5</id>
        <label>Rims1</label>
    </interactant>
    <organismsDiffer>false</organismsDiffer>
    <experiments>4</experiments>
</comment>
<comment type="subcellular location">
    <subcellularLocation>
        <location evidence="2">Cytoplasm</location>
    </subcellularLocation>
    <text>Isoform 3 is present at the presynaptic membrane.</text>
</comment>
<comment type="alternative products">
    <event type="alternative splicing"/>
    <isoform>
        <id>Q9CZV8-1</id>
        <name>1</name>
        <sequence type="displayed"/>
    </isoform>
    <isoform>
        <id>Q9CZV8-4</id>
        <name>2</name>
        <sequence type="described" ref="VSP_038354"/>
    </isoform>
    <isoform>
        <id>Q9CZV8-3</id>
        <name>3</name>
        <name>Scrapper</name>
        <sequence type="described" ref="VSP_030770"/>
    </isoform>
</comment>
<comment type="tissue specificity">
    <text evidence="2">Highly expressed in brain.</text>
</comment>
<comment type="disruption phenotype">
    <text evidence="2">Altered electrophysiological synaptic activity, with increased frequency of miniature excitatory postsynaptic currents.</text>
</comment>
<comment type="sequence caution" evidence="5">
    <conflict type="miscellaneous discrepancy">
        <sequence resource="EMBL-CDS" id="BAC29349"/>
    </conflict>
    <text>Intron retention.</text>
</comment>
<comment type="sequence caution" evidence="5">
    <conflict type="erroneous initiation">
        <sequence resource="EMBL-CDS" id="BAD90157"/>
    </conflict>
</comment>
<evidence type="ECO:0000255" key="1">
    <source>
        <dbReference type="PROSITE-ProRule" id="PRU00080"/>
    </source>
</evidence>
<evidence type="ECO:0000269" key="2">
    <source>
    </source>
</evidence>
<evidence type="ECO:0000303" key="3">
    <source>
    </source>
</evidence>
<evidence type="ECO:0000303" key="4">
    <source>
    </source>
</evidence>
<evidence type="ECO:0000305" key="5"/>
<evidence type="ECO:0007744" key="6">
    <source>
    </source>
</evidence>
<evidence type="ECO:0007744" key="7">
    <source>
    </source>
</evidence>
<evidence type="ECO:0007744" key="8">
    <source>
    </source>
</evidence>
<accession>Q9CZV8</accession>
<accession>A7YE80</accession>
<accession>Q3UMN2</accession>
<accession>Q571F7</accession>
<accession>Q8BZ95</accession>